<protein>
    <recommendedName>
        <fullName>Phenylethanolamine N-methyltransferase</fullName>
        <shortName>PNMTase</shortName>
        <ecNumber evidence="5">2.1.1.28</ecNumber>
    </recommendedName>
    <alternativeName>
        <fullName>Noradrenaline N-methyltransferase</fullName>
    </alternativeName>
</protein>
<comment type="function">
    <text evidence="2 5">Catalyzes the transmethylation of nonepinephrine (noradrenaline) to form epinephrine (adrenaline), using S-adenosyl-L-methionine as the methyl donor (PubMed:17698731). Other substrates include phenylethanolamine, octopamine and normetanephrine (By similarity).</text>
</comment>
<comment type="catalytic activity">
    <reaction evidence="2">
        <text>phenylethanolamine + S-adenosyl-L-methionine = N-methylphenylethanolamine + S-adenosyl-L-homocysteine + H(+)</text>
        <dbReference type="Rhea" id="RHEA:12176"/>
        <dbReference type="ChEBI" id="CHEBI:15378"/>
        <dbReference type="ChEBI" id="CHEBI:57741"/>
        <dbReference type="ChEBI" id="CHEBI:57856"/>
        <dbReference type="ChEBI" id="CHEBI:57946"/>
        <dbReference type="ChEBI" id="CHEBI:59789"/>
        <dbReference type="EC" id="2.1.1.28"/>
    </reaction>
    <physiologicalReaction direction="left-to-right" evidence="2">
        <dbReference type="Rhea" id="RHEA:12177"/>
    </physiologicalReaction>
</comment>
<comment type="catalytic activity">
    <reaction evidence="5">
        <text>(R)-noradrenaline + S-adenosyl-L-methionine = (R)-adrenaline + S-adenosyl-L-homocysteine + H(+)</text>
        <dbReference type="Rhea" id="RHEA:25269"/>
        <dbReference type="ChEBI" id="CHEBI:15378"/>
        <dbReference type="ChEBI" id="CHEBI:57856"/>
        <dbReference type="ChEBI" id="CHEBI:59789"/>
        <dbReference type="ChEBI" id="CHEBI:71406"/>
        <dbReference type="ChEBI" id="CHEBI:72587"/>
        <dbReference type="EC" id="2.1.1.28"/>
    </reaction>
    <physiologicalReaction direction="left-to-right" evidence="8">
        <dbReference type="Rhea" id="RHEA:25270"/>
    </physiologicalReaction>
</comment>
<comment type="catalytic activity">
    <reaction evidence="1">
        <text>(R)-normetanephrine + S-adenosyl-L-methionine = (R)-metanephrine + S-adenosyl-L-homocysteine + H(+)</text>
        <dbReference type="Rhea" id="RHEA:70683"/>
        <dbReference type="ChEBI" id="CHEBI:15378"/>
        <dbReference type="ChEBI" id="CHEBI:57856"/>
        <dbReference type="ChEBI" id="CHEBI:59789"/>
        <dbReference type="ChEBI" id="CHEBI:189645"/>
        <dbReference type="ChEBI" id="CHEBI:189646"/>
    </reaction>
    <physiologicalReaction direction="left-to-right" evidence="1">
        <dbReference type="Rhea" id="RHEA:70684"/>
    </physiologicalReaction>
</comment>
<comment type="catalytic activity">
    <reaction evidence="1">
        <text>(R)-octopamine + S-adenosyl-L-methionine = (R)-synephrine + S-adenosyl-L-homocysteine + H(+)</text>
        <dbReference type="Rhea" id="RHEA:70519"/>
        <dbReference type="ChEBI" id="CHEBI:15378"/>
        <dbReference type="ChEBI" id="CHEBI:57856"/>
        <dbReference type="ChEBI" id="CHEBI:59789"/>
        <dbReference type="ChEBI" id="CHEBI:63694"/>
        <dbReference type="ChEBI" id="CHEBI:141486"/>
    </reaction>
    <physiologicalReaction direction="left-to-right" evidence="1">
        <dbReference type="Rhea" id="RHEA:70520"/>
    </physiologicalReaction>
</comment>
<comment type="pathway">
    <text evidence="5">Catecholamine biosynthesis; (R)-adrenaline biosynthesis; (R)-adrenaline from (R)-noradrenaline: step 1/1.</text>
</comment>
<comment type="tissue specificity">
    <text evidence="4 5 6">Brain (pons and medulla oblongata), adrenal gland, retina and heart.</text>
</comment>
<comment type="disruption phenotype">
    <text evidence="5">In knockout (KO) mice, resting cardiovascular function, including blood pressure (BP), heart rate and cardiac output is the same as that in wild-type mice (PubMed:17698731). Significant difference, however, is observed in the BP response to exercise (PubMed:17698731). The relative diastolic wall thickness and the ratio of left ventricular posterior wall thickness (LVPW) to left ventricular internal dimension (LVID) are significantly increased in KO mice (PubMed:17698731).</text>
</comment>
<comment type="similarity">
    <text evidence="7">Belongs to the class I-like SAM-binding methyltransferase superfamily. NNMT/PNMT/TEMT family.</text>
</comment>
<proteinExistence type="evidence at protein level"/>
<reference key="1">
    <citation type="journal article" date="1994" name="Transgenic Res.">
        <title>Visualization and ablation of phenylethanolamine N-methyltransferase producing cells in transgenic mice.</title>
        <authorList>
            <person name="Quaife C.J."/>
            <person name="Hoyle G.W."/>
            <person name="Froelick G.J."/>
            <person name="Findley S.D."/>
            <person name="Baetge E.E."/>
            <person name="Behringer R.R."/>
            <person name="Hammang J.P."/>
            <person name="Brinster R.L."/>
            <person name="Palmiter R.D."/>
        </authorList>
    </citation>
    <scope>NUCLEOTIDE SEQUENCE [GENOMIC DNA]</scope>
    <scope>TISSUE SPECIFICITY</scope>
</reference>
<reference key="2">
    <citation type="journal article" date="1992" name="Brain Res. Mol. Brain Res.">
        <title>Organization and complete nucleotide sequence of the gene encoding mouse phenylethanolamine N-methyltransferase.</title>
        <authorList>
            <person name="Morita S."/>
            <person name="Kobayashi K."/>
            <person name="Hidaka H."/>
            <person name="Nagatsu T."/>
        </authorList>
    </citation>
    <scope>NUCLEOTIDE SEQUENCE [GENOMIC DNA]</scope>
    <scope>TISSUE SPECIFICITY</scope>
    <source>
        <strain>DBA/2J</strain>
    </source>
</reference>
<reference key="3">
    <citation type="journal article" date="2007" name="Circulation">
        <title>Epinephrine is required for normal cardiovascular responses to stress in the phenylethanolamine N-methyltransferase knockout mouse.</title>
        <authorList>
            <person name="Bao X."/>
            <person name="Lu C.M."/>
            <person name="Liu F."/>
            <person name="Gu Y."/>
            <person name="Dalton N.D."/>
            <person name="Zhu B.Q."/>
            <person name="Foster E."/>
            <person name="Chen J."/>
            <person name="Karliner J.S."/>
            <person name="Ross J. Jr."/>
            <person name="Simpson P.C."/>
            <person name="Ziegler M.G."/>
        </authorList>
    </citation>
    <scope>FUNCTION</scope>
    <scope>CATALYTIC ACTIVITY</scope>
    <scope>DISRUPTION PHENOTYPE</scope>
    <scope>TISSUE SPECIFICITY</scope>
    <scope>PATHWAY</scope>
</reference>
<accession>P40935</accession>
<feature type="initiator methionine" description="Removed" evidence="2">
    <location>
        <position position="1"/>
    </location>
</feature>
<feature type="chain" id="PRO_0000159710" description="Phenylethanolamine N-methyltransferase">
    <location>
        <begin position="2"/>
        <end position="295"/>
    </location>
</feature>
<feature type="repeat" description="1">
    <location>
        <begin position="4"/>
        <end position="10"/>
    </location>
</feature>
<feature type="repeat" description="2">
    <location>
        <begin position="14"/>
        <end position="20"/>
    </location>
</feature>
<feature type="region of interest" description="Disordered" evidence="3">
    <location>
        <begin position="1"/>
        <end position="26"/>
    </location>
</feature>
<feature type="region of interest" description="2 X 7 AA repeats of G-S-D-[LP]-K-H-A">
    <location>
        <begin position="4"/>
        <end position="20"/>
    </location>
</feature>
<feature type="binding site" evidence="2">
    <location>
        <position position="46"/>
    </location>
    <ligand>
        <name>S-adenosyl-L-methionine</name>
        <dbReference type="ChEBI" id="CHEBI:59789"/>
    </ligand>
</feature>
<feature type="binding site" evidence="2">
    <location>
        <position position="51"/>
    </location>
    <ligand>
        <name>S-adenosyl-L-methionine</name>
        <dbReference type="ChEBI" id="CHEBI:59789"/>
    </ligand>
</feature>
<feature type="binding site" evidence="2">
    <location>
        <begin position="90"/>
        <end position="91"/>
    </location>
    <ligand>
        <name>S-adenosyl-L-methionine</name>
        <dbReference type="ChEBI" id="CHEBI:59789"/>
    </ligand>
</feature>
<feature type="binding site" evidence="2">
    <location>
        <position position="96"/>
    </location>
    <ligand>
        <name>S-adenosyl-L-methionine</name>
        <dbReference type="ChEBI" id="CHEBI:59789"/>
    </ligand>
</feature>
<feature type="binding site" evidence="2">
    <location>
        <position position="112"/>
    </location>
    <ligand>
        <name>S-adenosyl-L-methionine</name>
        <dbReference type="ChEBI" id="CHEBI:59789"/>
    </ligand>
</feature>
<feature type="binding site" evidence="2">
    <location>
        <position position="117"/>
    </location>
    <ligand>
        <name>S-adenosyl-L-methionine</name>
        <dbReference type="ChEBI" id="CHEBI:59789"/>
    </ligand>
</feature>
<feature type="binding site" evidence="2">
    <location>
        <begin position="169"/>
        <end position="170"/>
    </location>
    <ligand>
        <name>S-adenosyl-L-methionine</name>
        <dbReference type="ChEBI" id="CHEBI:59789"/>
    </ligand>
</feature>
<feature type="binding site" evidence="2">
    <location>
        <position position="192"/>
    </location>
    <ligand>
        <name>S-adenosyl-L-methionine</name>
        <dbReference type="ChEBI" id="CHEBI:59789"/>
    </ligand>
</feature>
<feature type="binding site" evidence="2">
    <location>
        <position position="230"/>
    </location>
    <ligand>
        <name>octopamine</name>
        <dbReference type="ChEBI" id="CHEBI:58025"/>
    </ligand>
</feature>
<feature type="binding site" evidence="2">
    <location>
        <position position="278"/>
    </location>
    <ligand>
        <name>octopamine</name>
        <dbReference type="ChEBI" id="CHEBI:58025"/>
    </ligand>
</feature>
<evidence type="ECO:0000250" key="1">
    <source>
        <dbReference type="UniProtKB" id="P10937"/>
    </source>
</evidence>
<evidence type="ECO:0000250" key="2">
    <source>
        <dbReference type="UniProtKB" id="P11086"/>
    </source>
</evidence>
<evidence type="ECO:0000256" key="3">
    <source>
        <dbReference type="SAM" id="MobiDB-lite"/>
    </source>
</evidence>
<evidence type="ECO:0000269" key="4">
    <source>
    </source>
</evidence>
<evidence type="ECO:0000269" key="5">
    <source>
    </source>
</evidence>
<evidence type="ECO:0000269" key="6">
    <source>
    </source>
</evidence>
<evidence type="ECO:0000305" key="7"/>
<evidence type="ECO:0000305" key="8">
    <source>
    </source>
</evidence>
<dbReference type="EC" id="2.1.1.28" evidence="5"/>
<dbReference type="EMBL" id="L12687">
    <property type="protein sequence ID" value="AAA68934.1"/>
    <property type="molecule type" value="Genomic_DNA"/>
</dbReference>
<dbReference type="CCDS" id="CCDS25347.1"/>
<dbReference type="RefSeq" id="NP_032916.1">
    <property type="nucleotide sequence ID" value="NM_008890.3"/>
</dbReference>
<dbReference type="SMR" id="P40935"/>
<dbReference type="FunCoup" id="P40935">
    <property type="interactions" value="123"/>
</dbReference>
<dbReference type="STRING" id="10090.ENSMUSP00000035549"/>
<dbReference type="ChEMBL" id="CHEMBL4874"/>
<dbReference type="iPTMnet" id="P40935"/>
<dbReference type="PhosphoSitePlus" id="P40935"/>
<dbReference type="PaxDb" id="10090-ENSMUSP00000035549"/>
<dbReference type="ProteomicsDB" id="289638"/>
<dbReference type="Antibodypedia" id="28325">
    <property type="antibodies" value="536 antibodies from 33 providers"/>
</dbReference>
<dbReference type="DNASU" id="18948"/>
<dbReference type="Ensembl" id="ENSMUST00000041301.8">
    <property type="protein sequence ID" value="ENSMUSP00000035549.8"/>
    <property type="gene ID" value="ENSMUSG00000038216.8"/>
</dbReference>
<dbReference type="GeneID" id="18948"/>
<dbReference type="KEGG" id="mmu:18948"/>
<dbReference type="UCSC" id="uc007lgg.1">
    <property type="organism name" value="mouse"/>
</dbReference>
<dbReference type="AGR" id="MGI:97724"/>
<dbReference type="CTD" id="5409"/>
<dbReference type="MGI" id="MGI:97724">
    <property type="gene designation" value="Pnmt"/>
</dbReference>
<dbReference type="VEuPathDB" id="HostDB:ENSMUSG00000038216"/>
<dbReference type="eggNOG" id="ENOG502QT44">
    <property type="taxonomic scope" value="Eukaryota"/>
</dbReference>
<dbReference type="GeneTree" id="ENSGT00390000011708"/>
<dbReference type="HOGENOM" id="CLU_082526_2_0_1"/>
<dbReference type="InParanoid" id="P40935"/>
<dbReference type="OMA" id="NNYMPPR"/>
<dbReference type="OrthoDB" id="10050085at2759"/>
<dbReference type="PhylomeDB" id="P40935"/>
<dbReference type="TreeFam" id="TF313114"/>
<dbReference type="BRENDA" id="2.1.1.28">
    <property type="organism ID" value="3474"/>
</dbReference>
<dbReference type="Reactome" id="R-MMU-209905">
    <property type="pathway name" value="Catecholamine biosynthesis"/>
</dbReference>
<dbReference type="UniPathway" id="UPA00749">
    <property type="reaction ID" value="UER00736"/>
</dbReference>
<dbReference type="BioGRID-ORCS" id="18948">
    <property type="hits" value="6 hits in 78 CRISPR screens"/>
</dbReference>
<dbReference type="PRO" id="PR:P40935"/>
<dbReference type="Proteomes" id="UP000000589">
    <property type="component" value="Chromosome 11"/>
</dbReference>
<dbReference type="RNAct" id="P40935">
    <property type="molecule type" value="protein"/>
</dbReference>
<dbReference type="Bgee" id="ENSMUSG00000038216">
    <property type="expression patterns" value="Expressed in adrenal gland and 33 other cell types or tissues"/>
</dbReference>
<dbReference type="ExpressionAtlas" id="P40935">
    <property type="expression patterns" value="baseline and differential"/>
</dbReference>
<dbReference type="GO" id="GO:0004603">
    <property type="term" value="F:phenylethanolamine N-methyltransferase activity"/>
    <property type="evidence" value="ECO:0000314"/>
    <property type="project" value="UniProtKB"/>
</dbReference>
<dbReference type="GO" id="GO:0042418">
    <property type="term" value="P:epinephrine biosynthetic process"/>
    <property type="evidence" value="ECO:0007669"/>
    <property type="project" value="UniProtKB-UniPathway"/>
</dbReference>
<dbReference type="GO" id="GO:0032259">
    <property type="term" value="P:methylation"/>
    <property type="evidence" value="ECO:0007669"/>
    <property type="project" value="UniProtKB-KW"/>
</dbReference>
<dbReference type="CDD" id="cd02440">
    <property type="entry name" value="AdoMet_MTases"/>
    <property type="match status" value="1"/>
</dbReference>
<dbReference type="FunFam" id="3.40.50.150:FF:000065">
    <property type="entry name" value="Phenylethanolamine N-methyltransferase"/>
    <property type="match status" value="1"/>
</dbReference>
<dbReference type="Gene3D" id="3.40.50.150">
    <property type="entry name" value="Vaccinia Virus protein VP39"/>
    <property type="match status" value="1"/>
</dbReference>
<dbReference type="InterPro" id="IPR025820">
    <property type="entry name" value="NNMT/PNMT/TEMT_CS"/>
</dbReference>
<dbReference type="InterPro" id="IPR000940">
    <property type="entry name" value="NNMT_TEMT_trans"/>
</dbReference>
<dbReference type="InterPro" id="IPR053384">
    <property type="entry name" value="SAM-dep_methyltransferase"/>
</dbReference>
<dbReference type="InterPro" id="IPR029063">
    <property type="entry name" value="SAM-dependent_MTases_sf"/>
</dbReference>
<dbReference type="NCBIfam" id="NF041360">
    <property type="entry name" value="GntF_guanitoxin"/>
    <property type="match status" value="1"/>
</dbReference>
<dbReference type="PANTHER" id="PTHR10867">
    <property type="entry name" value="NNMT/PNMT/TEMT FAMILY MEMBER"/>
    <property type="match status" value="1"/>
</dbReference>
<dbReference type="PANTHER" id="PTHR10867:SF18">
    <property type="entry name" value="PHENYLETHANOLAMINE N-METHYLTRANSFERASE"/>
    <property type="match status" value="1"/>
</dbReference>
<dbReference type="Pfam" id="PF01234">
    <property type="entry name" value="NNMT_PNMT_TEMT"/>
    <property type="match status" value="1"/>
</dbReference>
<dbReference type="PIRSF" id="PIRSF000384">
    <property type="entry name" value="PNMTase"/>
    <property type="match status" value="1"/>
</dbReference>
<dbReference type="SUPFAM" id="SSF53335">
    <property type="entry name" value="S-adenosyl-L-methionine-dependent methyltransferases"/>
    <property type="match status" value="1"/>
</dbReference>
<dbReference type="PROSITE" id="PS01100">
    <property type="entry name" value="NNMT_PNMT_TEMT"/>
    <property type="match status" value="1"/>
</dbReference>
<dbReference type="PROSITE" id="PS51681">
    <property type="entry name" value="SAM_MT_NNMT_PNMT_TEMT"/>
    <property type="match status" value="1"/>
</dbReference>
<name>PNMT_MOUSE</name>
<organism>
    <name type="scientific">Mus musculus</name>
    <name type="common">Mouse</name>
    <dbReference type="NCBI Taxonomy" id="10090"/>
    <lineage>
        <taxon>Eukaryota</taxon>
        <taxon>Metazoa</taxon>
        <taxon>Chordata</taxon>
        <taxon>Craniata</taxon>
        <taxon>Vertebrata</taxon>
        <taxon>Euteleostomi</taxon>
        <taxon>Mammalia</taxon>
        <taxon>Eutheria</taxon>
        <taxon>Euarchontoglires</taxon>
        <taxon>Glires</taxon>
        <taxon>Rodentia</taxon>
        <taxon>Myomorpha</taxon>
        <taxon>Muroidea</taxon>
        <taxon>Muridae</taxon>
        <taxon>Murinae</taxon>
        <taxon>Mus</taxon>
        <taxon>Mus</taxon>
    </lineage>
</organism>
<sequence length="295" mass="32544">MNGGSDLKHATGSGSDPKHAAEMDPDSDAGQVAVALAYQRFEPRAYLRNNYAPPRGDLSNPDGVGPWKLRCMAQVFATGEVSGRVLIDIGSGPTIYQLLSACAHFEDITMTDFLEVNRQELGLWLREEPGAFDWSVYSQHACLIEDKGESWQEKERQLRARVKRVLPIDVHKPQPLGTPSLVPLPADALVSAFCLEAVSPDLTSFQRALHHITTLLRPGGHLLLIGALEESWYLAGEARLSVVPVSEEEVREALVLGGYEVRELRTYIMPAHLCTGVDDVKGIFFAWAQKMEVQV</sequence>
<keyword id="KW-0127">Catecholamine biosynthesis</keyword>
<keyword id="KW-0489">Methyltransferase</keyword>
<keyword id="KW-1185">Reference proteome</keyword>
<keyword id="KW-0677">Repeat</keyword>
<keyword id="KW-0949">S-adenosyl-L-methionine</keyword>
<keyword id="KW-0808">Transferase</keyword>
<gene>
    <name type="primary">Pnmt</name>
</gene>